<feature type="chain" id="PRO_0000030584" description="Large ribosomal subunit protein bL9m">
    <location>
        <begin position="1"/>
        <end position="139"/>
    </location>
</feature>
<feature type="region of interest" description="Disordered" evidence="1">
    <location>
        <begin position="83"/>
        <end position="121"/>
    </location>
</feature>
<gene>
    <name type="primary">MRPL50</name>
    <name type="ordered locus">YNR022C</name>
    <name type="ORF">N3220</name>
</gene>
<keyword id="KW-0002">3D-structure</keyword>
<keyword id="KW-0496">Mitochondrion</keyword>
<keyword id="KW-1185">Reference proteome</keyword>
<keyword id="KW-0687">Ribonucleoprotein</keyword>
<keyword id="KW-0689">Ribosomal protein</keyword>
<dbReference type="EMBL" id="Z71637">
    <property type="protein sequence ID" value="CAA96301.1"/>
    <property type="molecule type" value="Genomic_DNA"/>
</dbReference>
<dbReference type="EMBL" id="BK006947">
    <property type="protein sequence ID" value="DAA10563.1"/>
    <property type="molecule type" value="Genomic_DNA"/>
</dbReference>
<dbReference type="PIR" id="S63353">
    <property type="entry name" value="S63353"/>
</dbReference>
<dbReference type="RefSeq" id="NP_014419.1">
    <property type="nucleotide sequence ID" value="NM_001183199.1"/>
</dbReference>
<dbReference type="PDB" id="3J6B">
    <property type="method" value="EM"/>
    <property type="resolution" value="3.20 A"/>
    <property type="chains" value="G=1-139"/>
</dbReference>
<dbReference type="PDB" id="5MRC">
    <property type="method" value="EM"/>
    <property type="resolution" value="3.25 A"/>
    <property type="chains" value="G=10-83"/>
</dbReference>
<dbReference type="PDB" id="5MRE">
    <property type="method" value="EM"/>
    <property type="resolution" value="3.75 A"/>
    <property type="chains" value="G=10-83"/>
</dbReference>
<dbReference type="PDB" id="5MRF">
    <property type="method" value="EM"/>
    <property type="resolution" value="4.97 A"/>
    <property type="chains" value="G=10-83"/>
</dbReference>
<dbReference type="PDBsum" id="3J6B"/>
<dbReference type="PDBsum" id="5MRC"/>
<dbReference type="PDBsum" id="5MRE"/>
<dbReference type="PDBsum" id="5MRF"/>
<dbReference type="EMDB" id="EMD-3551"/>
<dbReference type="EMDB" id="EMD-3552"/>
<dbReference type="EMDB" id="EMD-3553"/>
<dbReference type="SMR" id="P53724"/>
<dbReference type="BioGRID" id="35847">
    <property type="interactions" value="164"/>
</dbReference>
<dbReference type="ComplexPortal" id="CPX-1602">
    <property type="entry name" value="54S mitochondrial large ribosomal subunit"/>
</dbReference>
<dbReference type="DIP" id="DIP-1265N"/>
<dbReference type="FunCoup" id="P53724">
    <property type="interactions" value="163"/>
</dbReference>
<dbReference type="IntAct" id="P53724">
    <property type="interactions" value="67"/>
</dbReference>
<dbReference type="MINT" id="P53724"/>
<dbReference type="STRING" id="4932.YNR022C"/>
<dbReference type="PaxDb" id="4932-YNR022C"/>
<dbReference type="PeptideAtlas" id="P53724"/>
<dbReference type="EnsemblFungi" id="YNR022C_mRNA">
    <property type="protein sequence ID" value="YNR022C"/>
    <property type="gene ID" value="YNR022C"/>
</dbReference>
<dbReference type="GeneID" id="855756"/>
<dbReference type="KEGG" id="sce:YNR022C"/>
<dbReference type="AGR" id="SGD:S000005305"/>
<dbReference type="SGD" id="S000005305">
    <property type="gene designation" value="MRPL50"/>
</dbReference>
<dbReference type="VEuPathDB" id="FungiDB:YNR022C"/>
<dbReference type="eggNOG" id="ENOG502S54F">
    <property type="taxonomic scope" value="Eukaryota"/>
</dbReference>
<dbReference type="HOGENOM" id="CLU_1846247_0_0_1"/>
<dbReference type="InParanoid" id="P53724"/>
<dbReference type="OMA" id="NYNGARY"/>
<dbReference type="OrthoDB" id="5555409at2759"/>
<dbReference type="BioCyc" id="YEAST:G3O-33336-MONOMER"/>
<dbReference type="BioGRID-ORCS" id="855756">
    <property type="hits" value="0 hits in 10 CRISPR screens"/>
</dbReference>
<dbReference type="PRO" id="PR:P53724"/>
<dbReference type="Proteomes" id="UP000002311">
    <property type="component" value="Chromosome XIV"/>
</dbReference>
<dbReference type="RNAct" id="P53724">
    <property type="molecule type" value="protein"/>
</dbReference>
<dbReference type="GO" id="GO:0005743">
    <property type="term" value="C:mitochondrial inner membrane"/>
    <property type="evidence" value="ECO:0000303"/>
    <property type="project" value="ComplexPortal"/>
</dbReference>
<dbReference type="GO" id="GO:0005762">
    <property type="term" value="C:mitochondrial large ribosomal subunit"/>
    <property type="evidence" value="ECO:0000314"/>
    <property type="project" value="SGD"/>
</dbReference>
<dbReference type="GO" id="GO:0005739">
    <property type="term" value="C:mitochondrion"/>
    <property type="evidence" value="ECO:0007005"/>
    <property type="project" value="SGD"/>
</dbReference>
<dbReference type="GO" id="GO:0003735">
    <property type="term" value="F:structural constituent of ribosome"/>
    <property type="evidence" value="ECO:0000314"/>
    <property type="project" value="SGD"/>
</dbReference>
<dbReference type="GO" id="GO:0032543">
    <property type="term" value="P:mitochondrial translation"/>
    <property type="evidence" value="ECO:0000303"/>
    <property type="project" value="ComplexPortal"/>
</dbReference>
<dbReference type="Gene3D" id="3.40.5.10">
    <property type="entry name" value="Ribosomal protein L9, N-terminal domain"/>
    <property type="match status" value="1"/>
</dbReference>
<dbReference type="InterPro" id="IPR036935">
    <property type="entry name" value="Ribosomal_bL9_N_sf"/>
</dbReference>
<sequence>MLHCTQVCLSALTKRTHRVKVQVLKDFPRFQLYKGQVANVKPSLMRNYLHNFNGAKYILSEEHDINTELLKQYQTLEAKLEEDHQQLSKRHETEVQKNMELRKESVFGHKKEEKPKEEKKGLLDSGITIEEVKIPGLDI</sequence>
<evidence type="ECO:0000256" key="1">
    <source>
        <dbReference type="SAM" id="MobiDB-lite"/>
    </source>
</evidence>
<evidence type="ECO:0000269" key="2">
    <source>
    </source>
</evidence>
<evidence type="ECO:0000269" key="3">
    <source>
    </source>
</evidence>
<evidence type="ECO:0000269" key="4">
    <source>
    </source>
</evidence>
<evidence type="ECO:0000269" key="5">
    <source>
    </source>
</evidence>
<evidence type="ECO:0000269" key="6">
    <source>
    </source>
</evidence>
<evidence type="ECO:0000303" key="7">
    <source>
    </source>
</evidence>
<evidence type="ECO:0000305" key="8"/>
<evidence type="ECO:0000305" key="9">
    <source>
    </source>
</evidence>
<evidence type="ECO:0000305" key="10">
    <source>
    </source>
</evidence>
<protein>
    <recommendedName>
        <fullName evidence="7">Large ribosomal subunit protein bL9m</fullName>
    </recommendedName>
    <alternativeName>
        <fullName>54S ribosomal protein L50, mitochondrial</fullName>
    </alternativeName>
</protein>
<proteinExistence type="evidence at protein level"/>
<accession>P53724</accession>
<accession>D6W1J7</accession>
<name>RM50_YEAST</name>
<organism>
    <name type="scientific">Saccharomyces cerevisiae (strain ATCC 204508 / S288c)</name>
    <name type="common">Baker's yeast</name>
    <dbReference type="NCBI Taxonomy" id="559292"/>
    <lineage>
        <taxon>Eukaryota</taxon>
        <taxon>Fungi</taxon>
        <taxon>Dikarya</taxon>
        <taxon>Ascomycota</taxon>
        <taxon>Saccharomycotina</taxon>
        <taxon>Saccharomycetes</taxon>
        <taxon>Saccharomycetales</taxon>
        <taxon>Saccharomycetaceae</taxon>
        <taxon>Saccharomyces</taxon>
    </lineage>
</organism>
<comment type="function">
    <text evidence="9 10">Component of the mitochondrial ribosome (mitoribosome), a dedicated translation machinery responsible for the synthesis of mitochondrial genome-encoded proteins, including at least some of the essential transmembrane subunits of the mitochondrial respiratory chain. The mitoribosomes are attached to the mitochondrial inner membrane and translation products are cotranslationally integrated into the membrane.</text>
</comment>
<comment type="subunit">
    <text evidence="2 5">Component of the mitochondrial large ribosomal subunit (mt-LSU). Mature yeast 74S mitochondrial ribosomes consist of a small (37S) and a large (54S) subunit. The 37S small subunit contains a 15S ribosomal RNA (15S mt-rRNA) and 34 different proteins. The 54S large subunit contains a 21S rRNA (21S mt-rRNA) and 46 different proteins.</text>
</comment>
<comment type="subcellular location">
    <subcellularLocation>
        <location evidence="3 4">Mitochondrion</location>
    </subcellularLocation>
    <text evidence="6">Mitoribosomes are tethered to the mitochondrial inner membrane and spatially aligned with the membrane insertion machinery through two distinct membrane contact sites, formed by the 21S rRNA expansion segment 96-ES1 and the inner membrane protein MBA1.</text>
</comment>
<comment type="similarity">
    <text evidence="8">Belongs to the bacterial ribosomal protein bL9 family.</text>
</comment>
<reference key="1">
    <citation type="journal article" date="1997" name="Nature">
        <title>The nucleotide sequence of Saccharomyces cerevisiae chromosome XIV and its evolutionary implications.</title>
        <authorList>
            <person name="Philippsen P."/>
            <person name="Kleine K."/>
            <person name="Poehlmann R."/>
            <person name="Duesterhoeft A."/>
            <person name="Hamberg K."/>
            <person name="Hegemann J.H."/>
            <person name="Obermaier B."/>
            <person name="Urrestarazu L.A."/>
            <person name="Aert R."/>
            <person name="Albermann K."/>
            <person name="Altmann R."/>
            <person name="Andre B."/>
            <person name="Baladron V."/>
            <person name="Ballesta J.P.G."/>
            <person name="Becam A.-M."/>
            <person name="Beinhauer J.D."/>
            <person name="Boskovic J."/>
            <person name="Buitrago M.J."/>
            <person name="Bussereau F."/>
            <person name="Coster F."/>
            <person name="Crouzet M."/>
            <person name="D'Angelo M."/>
            <person name="Dal Pero F."/>
            <person name="De Antoni A."/>
            <person name="del Rey F."/>
            <person name="Doignon F."/>
            <person name="Domdey H."/>
            <person name="Dubois E."/>
            <person name="Fiedler T.A."/>
            <person name="Fleig U."/>
            <person name="Floeth M."/>
            <person name="Fritz C."/>
            <person name="Gaillardin C."/>
            <person name="Garcia-Cantalejo J.M."/>
            <person name="Glansdorff N."/>
            <person name="Goffeau A."/>
            <person name="Gueldener U."/>
            <person name="Herbert C.J."/>
            <person name="Heumann K."/>
            <person name="Heuss-Neitzel D."/>
            <person name="Hilbert H."/>
            <person name="Hinni K."/>
            <person name="Iraqui Houssaini I."/>
            <person name="Jacquet M."/>
            <person name="Jimenez A."/>
            <person name="Jonniaux J.-L."/>
            <person name="Karpfinger-Hartl L."/>
            <person name="Lanfranchi G."/>
            <person name="Lepingle A."/>
            <person name="Levesque H."/>
            <person name="Lyck R."/>
            <person name="Maftahi M."/>
            <person name="Mallet L."/>
            <person name="Maurer C.T.C."/>
            <person name="Messenguy F."/>
            <person name="Mewes H.-W."/>
            <person name="Moestl D."/>
            <person name="Nasr F."/>
            <person name="Nicaud J.-M."/>
            <person name="Niedenthal R.K."/>
            <person name="Pandolfo D."/>
            <person name="Pierard A."/>
            <person name="Piravandi E."/>
            <person name="Planta R.J."/>
            <person name="Pohl T.M."/>
            <person name="Purnelle B."/>
            <person name="Rebischung C."/>
            <person name="Remacha M.A."/>
            <person name="Revuelta J.L."/>
            <person name="Rinke M."/>
            <person name="Saiz J.E."/>
            <person name="Sartorello F."/>
            <person name="Scherens B."/>
            <person name="Sen-Gupta M."/>
            <person name="Soler-Mira A."/>
            <person name="Urbanus J.H.M."/>
            <person name="Valle G."/>
            <person name="Van Dyck L."/>
            <person name="Verhasselt P."/>
            <person name="Vierendeels F."/>
            <person name="Vissers S."/>
            <person name="Voet M."/>
            <person name="Volckaert G."/>
            <person name="Wach A."/>
            <person name="Wambutt R."/>
            <person name="Wedler H."/>
            <person name="Zollner A."/>
            <person name="Hani J."/>
        </authorList>
    </citation>
    <scope>NUCLEOTIDE SEQUENCE [LARGE SCALE GENOMIC DNA]</scope>
    <source>
        <strain>ATCC 204508 / S288c</strain>
    </source>
</reference>
<reference key="2">
    <citation type="journal article" date="2014" name="G3 (Bethesda)">
        <title>The reference genome sequence of Saccharomyces cerevisiae: Then and now.</title>
        <authorList>
            <person name="Engel S.R."/>
            <person name="Dietrich F.S."/>
            <person name="Fisk D.G."/>
            <person name="Binkley G."/>
            <person name="Balakrishnan R."/>
            <person name="Costanzo M.C."/>
            <person name="Dwight S.S."/>
            <person name="Hitz B.C."/>
            <person name="Karra K."/>
            <person name="Nash R.S."/>
            <person name="Weng S."/>
            <person name="Wong E.D."/>
            <person name="Lloyd P."/>
            <person name="Skrzypek M.S."/>
            <person name="Miyasato S.R."/>
            <person name="Simison M."/>
            <person name="Cherry J.M."/>
        </authorList>
    </citation>
    <scope>GENOME REANNOTATION</scope>
    <source>
        <strain>ATCC 204508 / S288c</strain>
    </source>
</reference>
<reference key="3">
    <citation type="journal article" date="2002" name="Eur. J. Biochem.">
        <title>Tag-mediated isolation of yeast mitochondrial ribosome and mass spectrometric identification of its new components.</title>
        <authorList>
            <person name="Gan X."/>
            <person name="Kitakawa M."/>
            <person name="Yoshino K."/>
            <person name="Oshiro N."/>
            <person name="Yonezawa K."/>
            <person name="Isono K."/>
        </authorList>
    </citation>
    <scope>IDENTIFICATION IN THE MITOCHONDRIAL RIBOSOMAL LARGE COMPLEX</scope>
    <scope>IDENTIFICATION BY MASS SPECTROMETRY</scope>
</reference>
<reference key="4">
    <citation type="journal article" date="2003" name="Nature">
        <title>Global analysis of protein localization in budding yeast.</title>
        <authorList>
            <person name="Huh W.-K."/>
            <person name="Falvo J.V."/>
            <person name="Gerke L.C."/>
            <person name="Carroll A.S."/>
            <person name="Howson R.W."/>
            <person name="Weissman J.S."/>
            <person name="O'Shea E.K."/>
        </authorList>
    </citation>
    <scope>SUBCELLULAR LOCATION [LARGE SCALE ANALYSIS]</scope>
</reference>
<reference key="5">
    <citation type="journal article" date="2006" name="J. Proteome Res.">
        <title>Toward the complete yeast mitochondrial proteome: multidimensional separation techniques for mitochondrial proteomics.</title>
        <authorList>
            <person name="Reinders J."/>
            <person name="Zahedi R.P."/>
            <person name="Pfanner N."/>
            <person name="Meisinger C."/>
            <person name="Sickmann A."/>
        </authorList>
    </citation>
    <scope>SUBCELLULAR LOCATION [LARGE SCALE ANALYSIS]</scope>
    <scope>IDENTIFICATION BY MASS SPECTROMETRY</scope>
</reference>
<reference key="6">
    <citation type="journal article" date="2015" name="Nat. Commun.">
        <title>Organization of the mitochondrial translation machinery studied in situ by cryoelectron tomography.</title>
        <authorList>
            <person name="Pfeffer S."/>
            <person name="Woellhaf M.W."/>
            <person name="Herrmann J.M."/>
            <person name="Forster F."/>
        </authorList>
    </citation>
    <scope>SUBCELLULAR LOCATION</scope>
</reference>
<reference key="7">
    <citation type="journal article" date="2014" name="Science">
        <title>Structure of the yeast mitochondrial large ribosomal subunit.</title>
        <authorList>
            <person name="Amunts A."/>
            <person name="Brown A."/>
            <person name="Bai X.C."/>
            <person name="Llacer J.L."/>
            <person name="Hussain T."/>
            <person name="Emsley P."/>
            <person name="Long F."/>
            <person name="Murshudov G."/>
            <person name="Scheres S.H."/>
            <person name="Ramakrishnan V."/>
        </authorList>
    </citation>
    <scope>STRUCTURE BY ELECTRON MICROSCOPY (3.20 ANGSTROMS)</scope>
    <scope>SUBUNIT</scope>
</reference>